<proteinExistence type="inferred from homology"/>
<reference key="1">
    <citation type="submission" date="2006-11" db="EMBL/GenBank/DDBJ databases">
        <authorList>
            <consortium name="NIH - Xenopus Gene Collection (XGC) project"/>
        </authorList>
    </citation>
    <scope>NUCLEOTIDE SEQUENCE [LARGE SCALE MRNA]</scope>
    <source>
        <tissue>Testis</tissue>
    </source>
</reference>
<organism>
    <name type="scientific">Xenopus tropicalis</name>
    <name type="common">Western clawed frog</name>
    <name type="synonym">Silurana tropicalis</name>
    <dbReference type="NCBI Taxonomy" id="8364"/>
    <lineage>
        <taxon>Eukaryota</taxon>
        <taxon>Metazoa</taxon>
        <taxon>Chordata</taxon>
        <taxon>Craniata</taxon>
        <taxon>Vertebrata</taxon>
        <taxon>Euteleostomi</taxon>
        <taxon>Amphibia</taxon>
        <taxon>Batrachia</taxon>
        <taxon>Anura</taxon>
        <taxon>Pipoidea</taxon>
        <taxon>Pipidae</taxon>
        <taxon>Xenopodinae</taxon>
        <taxon>Xenopus</taxon>
        <taxon>Silurana</taxon>
    </lineage>
</organism>
<accession>A0JPA6</accession>
<sequence length="104" mass="12018">MDSRMKVLKLFKTLHRTRQCVFQNDCRALEAARRRINEEFKKNKSECSPAKISELLKFGTDVEIVLRTSVVQGIHTDSNKLVLQARKDLLLDNIPFCDAPEKQT</sequence>
<name>LYRM7_XENTR</name>
<feature type="chain" id="PRO_0000370344" description="Complex III assembly factor LYRM7">
    <location>
        <begin position="1"/>
        <end position="104"/>
    </location>
</feature>
<evidence type="ECO:0000250" key="1"/>
<evidence type="ECO:0000305" key="2"/>
<comment type="function">
    <text evidence="1">Assembly factor required for Rieske Fe-S protein UQCRFS1 incorporation into the cytochrome b-c1 (CIII) complex. Functions as a chaperone, binding to this subunit within the mitochondrial matrix and stabilizing it prior to its translocation and insertion into the late CIII dimeric intermediate within the mitochondrial inner membrane (By similarity).</text>
</comment>
<comment type="subunit">
    <text evidence="1">Interacts with UQCRFS1.</text>
</comment>
<comment type="subcellular location">
    <subcellularLocation>
        <location evidence="1">Mitochondrion matrix</location>
    </subcellularLocation>
</comment>
<comment type="similarity">
    <text evidence="2">Belongs to the complex I LYR family.</text>
</comment>
<gene>
    <name type="primary">lyrm7</name>
    <name type="synonym">MZM1L</name>
</gene>
<keyword id="KW-0143">Chaperone</keyword>
<keyword id="KW-0496">Mitochondrion</keyword>
<keyword id="KW-1185">Reference proteome</keyword>
<dbReference type="EMBL" id="BC127331">
    <property type="protein sequence ID" value="AAI27332.1"/>
    <property type="molecule type" value="mRNA"/>
</dbReference>
<dbReference type="RefSeq" id="NP_001096231.1">
    <property type="nucleotide sequence ID" value="NM_001102761.1"/>
</dbReference>
<dbReference type="SMR" id="A0JPA6"/>
<dbReference type="FunCoup" id="A0JPA6">
    <property type="interactions" value="598"/>
</dbReference>
<dbReference type="STRING" id="8364.ENSXETP00000014660"/>
<dbReference type="PaxDb" id="8364-ENSXETP00000058977"/>
<dbReference type="DNASU" id="100124785"/>
<dbReference type="GeneID" id="100124785"/>
<dbReference type="KEGG" id="xtr:100124785"/>
<dbReference type="AGR" id="Xenbase:XB-GENE-963575"/>
<dbReference type="CTD" id="90624"/>
<dbReference type="Xenbase" id="XB-GENE-963575">
    <property type="gene designation" value="lyrm7"/>
</dbReference>
<dbReference type="eggNOG" id="ENOG502S5FU">
    <property type="taxonomic scope" value="Eukaryota"/>
</dbReference>
<dbReference type="HOGENOM" id="CLU_147114_1_1_1"/>
<dbReference type="InParanoid" id="A0JPA6"/>
<dbReference type="OMA" id="TRQYVFH"/>
<dbReference type="OrthoDB" id="529194at2759"/>
<dbReference type="PhylomeDB" id="A0JPA6"/>
<dbReference type="TreeFam" id="TF324418"/>
<dbReference type="Reactome" id="R-XTR-9865881">
    <property type="pathway name" value="Complex III assembly"/>
</dbReference>
<dbReference type="Proteomes" id="UP000008143">
    <property type="component" value="Chromosome 1"/>
</dbReference>
<dbReference type="Bgee" id="ENSXETG00000030784">
    <property type="expression patterns" value="Expressed in testis and 13 other cell types or tissues"/>
</dbReference>
<dbReference type="GO" id="GO:0005759">
    <property type="term" value="C:mitochondrial matrix"/>
    <property type="evidence" value="ECO:0007669"/>
    <property type="project" value="UniProtKB-SubCell"/>
</dbReference>
<dbReference type="GO" id="GO:0034551">
    <property type="term" value="P:mitochondrial respiratory chain complex III assembly"/>
    <property type="evidence" value="ECO:0007669"/>
    <property type="project" value="InterPro"/>
</dbReference>
<dbReference type="CDD" id="cd20267">
    <property type="entry name" value="Complex1_LYR_LYRM7"/>
    <property type="match status" value="1"/>
</dbReference>
<dbReference type="InterPro" id="IPR008011">
    <property type="entry name" value="Complex1_LYR_dom"/>
</dbReference>
<dbReference type="InterPro" id="IPR045298">
    <property type="entry name" value="Complex1_LYR_LYRM7"/>
</dbReference>
<dbReference type="InterPro" id="IPR050435">
    <property type="entry name" value="MZM1/LYRM7"/>
</dbReference>
<dbReference type="PANTHER" id="PTHR46749">
    <property type="entry name" value="COMPLEX III ASSEMBLY FACTOR LYRM7"/>
    <property type="match status" value="1"/>
</dbReference>
<dbReference type="PANTHER" id="PTHR46749:SF1">
    <property type="entry name" value="COMPLEX III ASSEMBLY FACTOR LYRM7"/>
    <property type="match status" value="1"/>
</dbReference>
<dbReference type="Pfam" id="PF05347">
    <property type="entry name" value="Complex1_LYR"/>
    <property type="match status" value="1"/>
</dbReference>
<protein>
    <recommendedName>
        <fullName>Complex III assembly factor LYRM7</fullName>
    </recommendedName>
    <alternativeName>
        <fullName>LYR motif-containing protein 7</fullName>
    </alternativeName>
</protein>